<organism>
    <name type="scientific">Dictyostelium discoideum</name>
    <name type="common">Social amoeba</name>
    <dbReference type="NCBI Taxonomy" id="44689"/>
    <lineage>
        <taxon>Eukaryota</taxon>
        <taxon>Amoebozoa</taxon>
        <taxon>Evosea</taxon>
        <taxon>Eumycetozoa</taxon>
        <taxon>Dictyostelia</taxon>
        <taxon>Dictyosteliales</taxon>
        <taxon>Dictyosteliaceae</taxon>
        <taxon>Dictyostelium</taxon>
    </lineage>
</organism>
<accession>Q55CZ6</accession>
<dbReference type="EMBL" id="AAFI02000005">
    <property type="protein sequence ID" value="EAL72682.1"/>
    <property type="molecule type" value="Genomic_DNA"/>
</dbReference>
<dbReference type="RefSeq" id="XP_646335.1">
    <property type="nucleotide sequence ID" value="XM_641243.1"/>
</dbReference>
<dbReference type="SMR" id="Q55CZ6"/>
<dbReference type="FunCoup" id="Q55CZ6">
    <property type="interactions" value="63"/>
</dbReference>
<dbReference type="STRING" id="44689.Q55CZ6"/>
<dbReference type="PaxDb" id="44689-DDB0266859"/>
<dbReference type="EnsemblProtists" id="EAL72682">
    <property type="protein sequence ID" value="EAL72682"/>
    <property type="gene ID" value="DDB_G0270664"/>
</dbReference>
<dbReference type="GeneID" id="8617290"/>
<dbReference type="KEGG" id="ddi:DDB_G0270664"/>
<dbReference type="dictyBase" id="DDB_G0270664"/>
<dbReference type="VEuPathDB" id="AmoebaDB:DDB_G0270664"/>
<dbReference type="eggNOG" id="KOG2545">
    <property type="taxonomic scope" value="Eukaryota"/>
</dbReference>
<dbReference type="HOGENOM" id="CLU_029811_0_0_1"/>
<dbReference type="InParanoid" id="Q55CZ6"/>
<dbReference type="OMA" id="EEHTEMI"/>
<dbReference type="PhylomeDB" id="Q55CZ6"/>
<dbReference type="PRO" id="PR:Q55CZ6"/>
<dbReference type="Proteomes" id="UP000002195">
    <property type="component" value="Chromosome 1"/>
</dbReference>
<dbReference type="GO" id="GO:0005634">
    <property type="term" value="C:nucleus"/>
    <property type="evidence" value="ECO:0007669"/>
    <property type="project" value="UniProtKB-SubCell"/>
</dbReference>
<dbReference type="GO" id="GO:0003682">
    <property type="term" value="F:chromatin binding"/>
    <property type="evidence" value="ECO:0000318"/>
    <property type="project" value="GO_Central"/>
</dbReference>
<dbReference type="GO" id="GO:0051301">
    <property type="term" value="P:cell division"/>
    <property type="evidence" value="ECO:0007669"/>
    <property type="project" value="UniProtKB-KW"/>
</dbReference>
<dbReference type="GO" id="GO:0006261">
    <property type="term" value="P:DNA-templated DNA replication"/>
    <property type="evidence" value="ECO:0000318"/>
    <property type="project" value="GO_Central"/>
</dbReference>
<dbReference type="InterPro" id="IPR019140">
    <property type="entry name" value="MCM_complex-bd"/>
</dbReference>
<dbReference type="PANTHER" id="PTHR13489">
    <property type="entry name" value="MINI-CHROMOSOME MAINTENANCE COMPLEX-BINDING PROTEIN"/>
    <property type="match status" value="1"/>
</dbReference>
<dbReference type="PANTHER" id="PTHR13489:SF0">
    <property type="entry name" value="MINI-CHROMOSOME MAINTENANCE COMPLEX-BINDING PROTEIN"/>
    <property type="match status" value="1"/>
</dbReference>
<dbReference type="Pfam" id="PF09739">
    <property type="entry name" value="MCM_bind"/>
    <property type="match status" value="1"/>
</dbReference>
<feature type="chain" id="PRO_0000328427" description="Mini-chromosome maintenance complex-binding protein">
    <location>
        <begin position="1"/>
        <end position="719"/>
    </location>
</feature>
<feature type="region of interest" description="Disordered" evidence="2">
    <location>
        <begin position="152"/>
        <end position="179"/>
    </location>
</feature>
<feature type="region of interest" description="Disordered" evidence="2">
    <location>
        <begin position="194"/>
        <end position="236"/>
    </location>
</feature>
<feature type="region of interest" description="Disordered" evidence="2">
    <location>
        <begin position="375"/>
        <end position="416"/>
    </location>
</feature>
<feature type="compositionally biased region" description="Low complexity" evidence="2">
    <location>
        <begin position="152"/>
        <end position="174"/>
    </location>
</feature>
<feature type="compositionally biased region" description="Basic and acidic residues" evidence="2">
    <location>
        <begin position="194"/>
        <end position="211"/>
    </location>
</feature>
<feature type="compositionally biased region" description="Low complexity" evidence="2">
    <location>
        <begin position="212"/>
        <end position="221"/>
    </location>
</feature>
<feature type="compositionally biased region" description="Low complexity" evidence="2">
    <location>
        <begin position="377"/>
        <end position="416"/>
    </location>
</feature>
<gene>
    <name type="primary">mcmbp</name>
    <name type="ORF">DDB_G0270664</name>
</gene>
<proteinExistence type="inferred from homology"/>
<reference key="1">
    <citation type="journal article" date="2005" name="Nature">
        <title>The genome of the social amoeba Dictyostelium discoideum.</title>
        <authorList>
            <person name="Eichinger L."/>
            <person name="Pachebat J.A."/>
            <person name="Gloeckner G."/>
            <person name="Rajandream M.A."/>
            <person name="Sucgang R."/>
            <person name="Berriman M."/>
            <person name="Song J."/>
            <person name="Olsen R."/>
            <person name="Szafranski K."/>
            <person name="Xu Q."/>
            <person name="Tunggal B."/>
            <person name="Kummerfeld S."/>
            <person name="Madera M."/>
            <person name="Konfortov B.A."/>
            <person name="Rivero F."/>
            <person name="Bankier A.T."/>
            <person name="Lehmann R."/>
            <person name="Hamlin N."/>
            <person name="Davies R."/>
            <person name="Gaudet P."/>
            <person name="Fey P."/>
            <person name="Pilcher K."/>
            <person name="Chen G."/>
            <person name="Saunders D."/>
            <person name="Sodergren E.J."/>
            <person name="Davis P."/>
            <person name="Kerhornou A."/>
            <person name="Nie X."/>
            <person name="Hall N."/>
            <person name="Anjard C."/>
            <person name="Hemphill L."/>
            <person name="Bason N."/>
            <person name="Farbrother P."/>
            <person name="Desany B."/>
            <person name="Just E."/>
            <person name="Morio T."/>
            <person name="Rost R."/>
            <person name="Churcher C.M."/>
            <person name="Cooper J."/>
            <person name="Haydock S."/>
            <person name="van Driessche N."/>
            <person name="Cronin A."/>
            <person name="Goodhead I."/>
            <person name="Muzny D.M."/>
            <person name="Mourier T."/>
            <person name="Pain A."/>
            <person name="Lu M."/>
            <person name="Harper D."/>
            <person name="Lindsay R."/>
            <person name="Hauser H."/>
            <person name="James K.D."/>
            <person name="Quiles M."/>
            <person name="Madan Babu M."/>
            <person name="Saito T."/>
            <person name="Buchrieser C."/>
            <person name="Wardroper A."/>
            <person name="Felder M."/>
            <person name="Thangavelu M."/>
            <person name="Johnson D."/>
            <person name="Knights A."/>
            <person name="Loulseged H."/>
            <person name="Mungall K.L."/>
            <person name="Oliver K."/>
            <person name="Price C."/>
            <person name="Quail M.A."/>
            <person name="Urushihara H."/>
            <person name="Hernandez J."/>
            <person name="Rabbinowitsch E."/>
            <person name="Steffen D."/>
            <person name="Sanders M."/>
            <person name="Ma J."/>
            <person name="Kohara Y."/>
            <person name="Sharp S."/>
            <person name="Simmonds M.N."/>
            <person name="Spiegler S."/>
            <person name="Tivey A."/>
            <person name="Sugano S."/>
            <person name="White B."/>
            <person name="Walker D."/>
            <person name="Woodward J.R."/>
            <person name="Winckler T."/>
            <person name="Tanaka Y."/>
            <person name="Shaulsky G."/>
            <person name="Schleicher M."/>
            <person name="Weinstock G.M."/>
            <person name="Rosenthal A."/>
            <person name="Cox E.C."/>
            <person name="Chisholm R.L."/>
            <person name="Gibbs R.A."/>
            <person name="Loomis W.F."/>
            <person name="Platzer M."/>
            <person name="Kay R.R."/>
            <person name="Williams J.G."/>
            <person name="Dear P.H."/>
            <person name="Noegel A.A."/>
            <person name="Barrell B.G."/>
            <person name="Kuspa A."/>
        </authorList>
    </citation>
    <scope>NUCLEOTIDE SEQUENCE [LARGE SCALE GENOMIC DNA]</scope>
    <source>
        <strain>AX4</strain>
    </source>
</reference>
<keyword id="KW-0131">Cell cycle</keyword>
<keyword id="KW-0132">Cell division</keyword>
<keyword id="KW-0235">DNA replication</keyword>
<keyword id="KW-0498">Mitosis</keyword>
<keyword id="KW-0539">Nucleus</keyword>
<keyword id="KW-1185">Reference proteome</keyword>
<name>MCMBP_DICDI</name>
<protein>
    <recommendedName>
        <fullName>Mini-chromosome maintenance complex-binding protein</fullName>
        <shortName>MCM-BP</shortName>
        <shortName>MCM-binding protein</shortName>
    </recommendedName>
</protein>
<evidence type="ECO:0000250" key="1"/>
<evidence type="ECO:0000256" key="2">
    <source>
        <dbReference type="SAM" id="MobiDB-lite"/>
    </source>
</evidence>
<evidence type="ECO:0000305" key="3"/>
<sequence>MTDNNNLDSLIIDKDEYLNSPMNVVDKLFKFDQNNLNNGTVYKKFENVISEDQIYKSIPLVSTINQCDLNSGKLVKIRCMIQDIFDPQFCPSFNKIKNIETNEIRLEASKYKDKINLNDCEELIFDSFDSSTFDKTILYCIPIPCENKWVNNNNNNNNNNNNNNNNNNNNNNNNGNEQISSSLLNKKKRNIDDADMKNENDEENKKSKDQKSTTTTTTTTSKEGEEEGEEGEQLTKSKKLLTNNKIDINKIFNYPIPIDSNDENNLKTPFIVNIYDDDIIFDENNKAVTFKINEIIEFVGVVAKFNPTLQHQSSNSSDQGETTTTIIDLMSMLDVDEISTIPDTLIPQFHAITYRYLDPYKFNHLNPFSIDTNTTINNNNNNNNNNNNNNNNNNNNNNNNNNNNNNPNNNNPNNNNLNNNLIRNELIKFIKLFIVDELLSEYLLFHLISKVYSFTSGLSIGNFSMNISIPNDKEFQRLPQLIELLYEILLARSYRFSMSLENLNDMDVVPYKDYDRNRIVSGLLQLPKGTNLILDETQLTEGKVESQGIKVLNALNTLSIQQKVEYDFKYHPIEIQTDLPTISISFGKSLIKGTTQISINKSIQLPTINEINQQLIHSYNNDKLNQFRNYINHCKNLSFKISSPTTTTIAESDDATRHIQEDFVKSRQLDSKMTTDVFHYWLTLSRLVALSFNDQYIKIDKWNIMKSLEEKRKLTINNL</sequence>
<comment type="function">
    <text evidence="1">Associated component of the MCM complex that acts as a regulator of DNA replication. Binds to the MCM complex during late S phase and may act by promoting the disassembly of the MCM complex from chromatin (By similarity).</text>
</comment>
<comment type="subunit">
    <text evidence="1">Interacts with the MCM complex.</text>
</comment>
<comment type="subcellular location">
    <subcellularLocation>
        <location evidence="1">Nucleus</location>
    </subcellularLocation>
</comment>
<comment type="similarity">
    <text evidence="3">Belongs to the MCMBP family.</text>
</comment>